<proteinExistence type="inferred from homology"/>
<evidence type="ECO:0000255" key="1">
    <source>
        <dbReference type="HAMAP-Rule" id="MF_02010"/>
    </source>
</evidence>
<comment type="function">
    <text evidence="1">Inhibits RpoS proteolysis by regulating RssB activity, thereby increasing the stability of the sigma stress factor RpoS during oxidative stress. Its effect on RpoS stability is due to its interaction with RssB, which probably blocks the interaction of RssB with RpoS, and the consequent delivery of the RssB-RpoS complex to the ClpXP protein degradation pathway.</text>
</comment>
<comment type="subunit">
    <text evidence="1">Interacts with RssB.</text>
</comment>
<comment type="subcellular location">
    <subcellularLocation>
        <location evidence="1">Cytoplasm</location>
    </subcellularLocation>
</comment>
<comment type="similarity">
    <text evidence="1">Belongs to the GpW/Gp25 family. IraD subfamily.</text>
</comment>
<gene>
    <name evidence="1" type="primary">iraD</name>
    <name type="ordered locus">SEN2973</name>
</gene>
<dbReference type="EMBL" id="AM933172">
    <property type="protein sequence ID" value="CAR34549.1"/>
    <property type="molecule type" value="Genomic_DNA"/>
</dbReference>
<dbReference type="RefSeq" id="WP_000988938.1">
    <property type="nucleotide sequence ID" value="NC_011294.1"/>
</dbReference>
<dbReference type="SMR" id="B5QYA5"/>
<dbReference type="KEGG" id="set:SEN2973"/>
<dbReference type="HOGENOM" id="CLU_1977621_0_0_6"/>
<dbReference type="Proteomes" id="UP000000613">
    <property type="component" value="Chromosome"/>
</dbReference>
<dbReference type="GO" id="GO:0005737">
    <property type="term" value="C:cytoplasm"/>
    <property type="evidence" value="ECO:0007669"/>
    <property type="project" value="UniProtKB-SubCell"/>
</dbReference>
<dbReference type="GO" id="GO:0043856">
    <property type="term" value="F:anti-sigma factor antagonist activity"/>
    <property type="evidence" value="ECO:0007669"/>
    <property type="project" value="InterPro"/>
</dbReference>
<dbReference type="GO" id="GO:0034599">
    <property type="term" value="P:cellular response to oxidative stress"/>
    <property type="evidence" value="ECO:0007669"/>
    <property type="project" value="UniProtKB-UniRule"/>
</dbReference>
<dbReference type="GO" id="GO:0006974">
    <property type="term" value="P:DNA damage response"/>
    <property type="evidence" value="ECO:0007669"/>
    <property type="project" value="InterPro"/>
</dbReference>
<dbReference type="HAMAP" id="MF_02010">
    <property type="entry name" value="IraD"/>
    <property type="match status" value="1"/>
</dbReference>
<dbReference type="InterPro" id="IPR023776">
    <property type="entry name" value="Anti-adapt_IraD"/>
</dbReference>
<dbReference type="InterPro" id="IPR007048">
    <property type="entry name" value="IraD/Gp25-like"/>
</dbReference>
<dbReference type="NCBIfam" id="NF010727">
    <property type="entry name" value="PRK14128.1-2"/>
    <property type="match status" value="1"/>
</dbReference>
<dbReference type="Pfam" id="PF04965">
    <property type="entry name" value="GPW_gp25"/>
    <property type="match status" value="1"/>
</dbReference>
<keyword id="KW-0963">Cytoplasm</keyword>
<keyword id="KW-0346">Stress response</keyword>
<reference key="1">
    <citation type="journal article" date="2008" name="Genome Res.">
        <title>Comparative genome analysis of Salmonella enteritidis PT4 and Salmonella gallinarum 287/91 provides insights into evolutionary and host adaptation pathways.</title>
        <authorList>
            <person name="Thomson N.R."/>
            <person name="Clayton D.J."/>
            <person name="Windhorst D."/>
            <person name="Vernikos G."/>
            <person name="Davidson S."/>
            <person name="Churcher C."/>
            <person name="Quail M.A."/>
            <person name="Stevens M."/>
            <person name="Jones M.A."/>
            <person name="Watson M."/>
            <person name="Barron A."/>
            <person name="Layton A."/>
            <person name="Pickard D."/>
            <person name="Kingsley R.A."/>
            <person name="Bignell A."/>
            <person name="Clark L."/>
            <person name="Harris B."/>
            <person name="Ormond D."/>
            <person name="Abdellah Z."/>
            <person name="Brooks K."/>
            <person name="Cherevach I."/>
            <person name="Chillingworth T."/>
            <person name="Woodward J."/>
            <person name="Norberczak H."/>
            <person name="Lord A."/>
            <person name="Arrowsmith C."/>
            <person name="Jagels K."/>
            <person name="Moule S."/>
            <person name="Mungall K."/>
            <person name="Saunders M."/>
            <person name="Whitehead S."/>
            <person name="Chabalgoity J.A."/>
            <person name="Maskell D."/>
            <person name="Humphreys T."/>
            <person name="Roberts M."/>
            <person name="Barrow P.A."/>
            <person name="Dougan G."/>
            <person name="Parkhill J."/>
        </authorList>
    </citation>
    <scope>NUCLEOTIDE SEQUENCE [LARGE SCALE GENOMIC DNA]</scope>
    <source>
        <strain>P125109</strain>
    </source>
</reference>
<accession>B5QYA5</accession>
<name>IRAD_SALEP</name>
<organism>
    <name type="scientific">Salmonella enteritidis PT4 (strain P125109)</name>
    <dbReference type="NCBI Taxonomy" id="550537"/>
    <lineage>
        <taxon>Bacteria</taxon>
        <taxon>Pseudomonadati</taxon>
        <taxon>Pseudomonadota</taxon>
        <taxon>Gammaproteobacteria</taxon>
        <taxon>Enterobacterales</taxon>
        <taxon>Enterobacteriaceae</taxon>
        <taxon>Salmonella</taxon>
    </lineage>
</organism>
<feature type="chain" id="PRO_1000189484" description="Anti-adapter protein IraD">
    <location>
        <begin position="1"/>
        <end position="126"/>
    </location>
</feature>
<protein>
    <recommendedName>
        <fullName evidence="1">Anti-adapter protein IraD</fullName>
    </recommendedName>
</protein>
<sequence>MMTPTIPVALFDRLLVEGISPHELVRRKLMCLFNSCAVPGGETLPPLLTRGMPEWHEVNVGDKRVLNWFCRELRAAILRYEPSINMLKVSVKDAHHQTLALSLEAMLQDESEPLRLEIAYSNGRWR</sequence>